<reference key="1">
    <citation type="journal article" date="2000" name="Nature">
        <title>Complete genome sequence of Pseudomonas aeruginosa PAO1, an opportunistic pathogen.</title>
        <authorList>
            <person name="Stover C.K."/>
            <person name="Pham X.-Q.T."/>
            <person name="Erwin A.L."/>
            <person name="Mizoguchi S.D."/>
            <person name="Warrener P."/>
            <person name="Hickey M.J."/>
            <person name="Brinkman F.S.L."/>
            <person name="Hufnagle W.O."/>
            <person name="Kowalik D.J."/>
            <person name="Lagrou M."/>
            <person name="Garber R.L."/>
            <person name="Goltry L."/>
            <person name="Tolentino E."/>
            <person name="Westbrock-Wadman S."/>
            <person name="Yuan Y."/>
            <person name="Brody L.L."/>
            <person name="Coulter S.N."/>
            <person name="Folger K.R."/>
            <person name="Kas A."/>
            <person name="Larbig K."/>
            <person name="Lim R.M."/>
            <person name="Smith K.A."/>
            <person name="Spencer D.H."/>
            <person name="Wong G.K.-S."/>
            <person name="Wu Z."/>
            <person name="Paulsen I.T."/>
            <person name="Reizer J."/>
            <person name="Saier M.H. Jr."/>
            <person name="Hancock R.E.W."/>
            <person name="Lory S."/>
            <person name="Olson M.V."/>
        </authorList>
    </citation>
    <scope>NUCLEOTIDE SEQUENCE [LARGE SCALE GENOMIC DNA]</scope>
    <source>
        <strain>ATCC 15692 / DSM 22644 / CIP 104116 / JCM 14847 / LMG 12228 / 1C / PRS 101 / PAO1</strain>
    </source>
</reference>
<evidence type="ECO:0000255" key="1">
    <source>
        <dbReference type="HAMAP-Rule" id="MF_01043"/>
    </source>
</evidence>
<gene>
    <name evidence="1" type="primary">plsY</name>
    <name type="ordered locus">PA0581</name>
</gene>
<comment type="function">
    <text evidence="1">Catalyzes the transfer of an acyl group from acyl-phosphate (acyl-PO(4)) to glycerol-3-phosphate (G3P) to form lysophosphatidic acid (LPA). This enzyme utilizes acyl-phosphate as fatty acyl donor, but not acyl-CoA or acyl-ACP.</text>
</comment>
<comment type="catalytic activity">
    <reaction evidence="1">
        <text>an acyl phosphate + sn-glycerol 3-phosphate = a 1-acyl-sn-glycero-3-phosphate + phosphate</text>
        <dbReference type="Rhea" id="RHEA:34075"/>
        <dbReference type="ChEBI" id="CHEBI:43474"/>
        <dbReference type="ChEBI" id="CHEBI:57597"/>
        <dbReference type="ChEBI" id="CHEBI:57970"/>
        <dbReference type="ChEBI" id="CHEBI:59918"/>
        <dbReference type="EC" id="2.3.1.275"/>
    </reaction>
</comment>
<comment type="pathway">
    <text evidence="1">Lipid metabolism; phospholipid metabolism.</text>
</comment>
<comment type="subunit">
    <text evidence="1">Probably interacts with PlsX.</text>
</comment>
<comment type="subcellular location">
    <subcellularLocation>
        <location evidence="1">Cell inner membrane</location>
        <topology evidence="1">Multi-pass membrane protein</topology>
    </subcellularLocation>
</comment>
<comment type="similarity">
    <text evidence="1">Belongs to the PlsY family.</text>
</comment>
<name>PLSY_PSEAE</name>
<accession>Q9I5V6</accession>
<protein>
    <recommendedName>
        <fullName evidence="1">Glycerol-3-phosphate acyltransferase</fullName>
    </recommendedName>
    <alternativeName>
        <fullName evidence="1">Acyl-PO4 G3P acyltransferase</fullName>
    </alternativeName>
    <alternativeName>
        <fullName evidence="1">Acyl-phosphate--glycerol-3-phosphate acyltransferase</fullName>
    </alternativeName>
    <alternativeName>
        <fullName evidence="1">G3P acyltransferase</fullName>
        <shortName evidence="1">GPAT</shortName>
        <ecNumber evidence="1">2.3.1.275</ecNumber>
    </alternativeName>
    <alternativeName>
        <fullName evidence="1">Lysophosphatidic acid synthase</fullName>
        <shortName evidence="1">LPA synthase</shortName>
    </alternativeName>
</protein>
<sequence length="189" mass="20225">MVWLLAILAYLLGSLSFAVLLSRWFGTQDPRASGSGNPGATNMLRVAGKKLAILTLLGDVGKGLLPVLVARWLGLGVMEEAWVGIAAVIGHLYPLYFNFRGGKGVATAAGMLLGLYPPAVLLAAAAWLLTFKLSRTSSLASLVATPLTLPLLAWQQPGALLPMTVLTGLIVWRHRANLRDLFAGRERHF</sequence>
<keyword id="KW-0997">Cell inner membrane</keyword>
<keyword id="KW-1003">Cell membrane</keyword>
<keyword id="KW-0444">Lipid biosynthesis</keyword>
<keyword id="KW-0443">Lipid metabolism</keyword>
<keyword id="KW-0472">Membrane</keyword>
<keyword id="KW-0594">Phospholipid biosynthesis</keyword>
<keyword id="KW-1208">Phospholipid metabolism</keyword>
<keyword id="KW-1185">Reference proteome</keyword>
<keyword id="KW-0808">Transferase</keyword>
<keyword id="KW-0812">Transmembrane</keyword>
<keyword id="KW-1133">Transmembrane helix</keyword>
<organism>
    <name type="scientific">Pseudomonas aeruginosa (strain ATCC 15692 / DSM 22644 / CIP 104116 / JCM 14847 / LMG 12228 / 1C / PRS 101 / PAO1)</name>
    <dbReference type="NCBI Taxonomy" id="208964"/>
    <lineage>
        <taxon>Bacteria</taxon>
        <taxon>Pseudomonadati</taxon>
        <taxon>Pseudomonadota</taxon>
        <taxon>Gammaproteobacteria</taxon>
        <taxon>Pseudomonadales</taxon>
        <taxon>Pseudomonadaceae</taxon>
        <taxon>Pseudomonas</taxon>
    </lineage>
</organism>
<dbReference type="EC" id="2.3.1.275" evidence="1"/>
<dbReference type="EMBL" id="AE004091">
    <property type="protein sequence ID" value="AAG03970.1"/>
    <property type="molecule type" value="Genomic_DNA"/>
</dbReference>
<dbReference type="PIR" id="A83573">
    <property type="entry name" value="A83573"/>
</dbReference>
<dbReference type="RefSeq" id="NP_249272.1">
    <property type="nucleotide sequence ID" value="NC_002516.2"/>
</dbReference>
<dbReference type="RefSeq" id="WP_003085061.1">
    <property type="nucleotide sequence ID" value="NZ_QZGE01000010.1"/>
</dbReference>
<dbReference type="SMR" id="Q9I5V6"/>
<dbReference type="FunCoup" id="Q9I5V6">
    <property type="interactions" value="291"/>
</dbReference>
<dbReference type="STRING" id="208964.PA0581"/>
<dbReference type="PaxDb" id="208964-PA0581"/>
<dbReference type="GeneID" id="880814"/>
<dbReference type="KEGG" id="pae:PA0581"/>
<dbReference type="PATRIC" id="fig|208964.12.peg.616"/>
<dbReference type="PseudoCAP" id="PA0581"/>
<dbReference type="HOGENOM" id="CLU_081254_0_0_6"/>
<dbReference type="InParanoid" id="Q9I5V6"/>
<dbReference type="OrthoDB" id="9777124at2"/>
<dbReference type="PhylomeDB" id="Q9I5V6"/>
<dbReference type="BioCyc" id="PAER208964:G1FZ6-588-MONOMER"/>
<dbReference type="UniPathway" id="UPA00085"/>
<dbReference type="Proteomes" id="UP000002438">
    <property type="component" value="Chromosome"/>
</dbReference>
<dbReference type="GO" id="GO:0005886">
    <property type="term" value="C:plasma membrane"/>
    <property type="evidence" value="ECO:0000318"/>
    <property type="project" value="GO_Central"/>
</dbReference>
<dbReference type="GO" id="GO:0043772">
    <property type="term" value="F:acyl-phosphate glycerol-3-phosphate acyltransferase activity"/>
    <property type="evidence" value="ECO:0007669"/>
    <property type="project" value="UniProtKB-UniRule"/>
</dbReference>
<dbReference type="GO" id="GO:0008654">
    <property type="term" value="P:phospholipid biosynthetic process"/>
    <property type="evidence" value="ECO:0007669"/>
    <property type="project" value="UniProtKB-UniRule"/>
</dbReference>
<dbReference type="HAMAP" id="MF_01043">
    <property type="entry name" value="PlsY"/>
    <property type="match status" value="1"/>
</dbReference>
<dbReference type="InterPro" id="IPR003811">
    <property type="entry name" value="G3P_acylTferase_PlsY"/>
</dbReference>
<dbReference type="NCBIfam" id="TIGR00023">
    <property type="entry name" value="glycerol-3-phosphate 1-O-acyltransferase PlsY"/>
    <property type="match status" value="1"/>
</dbReference>
<dbReference type="PANTHER" id="PTHR30309:SF0">
    <property type="entry name" value="GLYCEROL-3-PHOSPHATE ACYLTRANSFERASE-RELATED"/>
    <property type="match status" value="1"/>
</dbReference>
<dbReference type="PANTHER" id="PTHR30309">
    <property type="entry name" value="INNER MEMBRANE PROTEIN YGIH"/>
    <property type="match status" value="1"/>
</dbReference>
<dbReference type="Pfam" id="PF02660">
    <property type="entry name" value="G3P_acyltransf"/>
    <property type="match status" value="1"/>
</dbReference>
<dbReference type="SMART" id="SM01207">
    <property type="entry name" value="G3P_acyltransf"/>
    <property type="match status" value="1"/>
</dbReference>
<proteinExistence type="inferred from homology"/>
<feature type="chain" id="PRO_0000188428" description="Glycerol-3-phosphate acyltransferase">
    <location>
        <begin position="1"/>
        <end position="189"/>
    </location>
</feature>
<feature type="transmembrane region" description="Helical" evidence="1">
    <location>
        <begin position="1"/>
        <end position="21"/>
    </location>
</feature>
<feature type="transmembrane region" description="Helical" evidence="1">
    <location>
        <begin position="50"/>
        <end position="70"/>
    </location>
</feature>
<feature type="transmembrane region" description="Helical" evidence="1">
    <location>
        <begin position="72"/>
        <end position="92"/>
    </location>
</feature>
<feature type="transmembrane region" description="Helical" evidence="1">
    <location>
        <begin position="111"/>
        <end position="131"/>
    </location>
</feature>
<feature type="transmembrane region" description="Helical" evidence="1">
    <location>
        <begin position="151"/>
        <end position="171"/>
    </location>
</feature>